<proteinExistence type="evidence at protein level"/>
<keyword id="KW-0511">Multifunctional enzyme</keyword>
<keyword id="KW-0596">Phosphopantetheine</keyword>
<keyword id="KW-0597">Phosphoprotein</keyword>
<keyword id="KW-0677">Repeat</keyword>
<keyword id="KW-0808">Transferase</keyword>
<protein>
    <recommendedName>
        <fullName evidence="8">Non-reducing polyketide synthase men2</fullName>
        <shortName evidence="8">NR-PKS men2</shortName>
        <ecNumber evidence="7">2.3.1.-</ecNumber>
    </recommendedName>
</protein>
<gene>
    <name evidence="8" type="primary">men2</name>
</gene>
<name>MEN2_MENTH</name>
<feature type="chain" id="PRO_0000457627" description="Non-reducing polyketide synthase men2">
    <location>
        <begin position="1"/>
        <end position="2186"/>
    </location>
</feature>
<feature type="domain" description="Starter acyltransferase (SAT)" evidence="2 9">
    <location>
        <begin position="16"/>
        <end position="255"/>
    </location>
</feature>
<feature type="domain" description="Ketosynthase family 3 (KS3)" evidence="4 9">
    <location>
        <begin position="382"/>
        <end position="815"/>
    </location>
</feature>
<feature type="domain" description="Malonyl-CoA:ACP transacylase (MAT)" evidence="2 9">
    <location>
        <begin position="914"/>
        <end position="1204"/>
    </location>
</feature>
<feature type="domain" description="PKS/mFAS DH" evidence="5">
    <location>
        <begin position="1303"/>
        <end position="1619"/>
    </location>
</feature>
<feature type="domain" description="Carrier 1" evidence="3 9">
    <location>
        <begin position="1666"/>
        <end position="1742"/>
    </location>
</feature>
<feature type="domain" description="Carrier 2" evidence="3 9">
    <location>
        <begin position="1784"/>
        <end position="1861"/>
    </location>
</feature>
<feature type="region of interest" description="Product template (PT) domain" evidence="2 9">
    <location>
        <begin position="1299"/>
        <end position="1623"/>
    </location>
</feature>
<feature type="region of interest" description="N-terminal hotdog fold" evidence="5">
    <location>
        <begin position="1303"/>
        <end position="1434"/>
    </location>
</feature>
<feature type="region of interest" description="C-terminal hotdog fold" evidence="5">
    <location>
        <begin position="1463"/>
        <end position="1619"/>
    </location>
</feature>
<feature type="region of interest" description="Disordered" evidence="6">
    <location>
        <begin position="1747"/>
        <end position="1785"/>
    </location>
</feature>
<feature type="region of interest" description="Disordered" evidence="6">
    <location>
        <begin position="1857"/>
        <end position="1878"/>
    </location>
</feature>
<feature type="region of interest" description="Thioesterase (TE) domain" evidence="1 2">
    <location>
        <begin position="1921"/>
        <end position="2163"/>
    </location>
</feature>
<feature type="compositionally biased region" description="Low complexity" evidence="6">
    <location>
        <begin position="1749"/>
        <end position="1783"/>
    </location>
</feature>
<feature type="active site" description="For beta-ketoacyl synthase activity" evidence="4">
    <location>
        <position position="554"/>
    </location>
</feature>
<feature type="active site" description="For beta-ketoacyl synthase activity" evidence="4">
    <location>
        <position position="690"/>
    </location>
</feature>
<feature type="active site" description="For beta-ketoacyl synthase activity" evidence="4">
    <location>
        <position position="729"/>
    </location>
</feature>
<feature type="active site" description="Proton acceptor; for dehydratase activity" evidence="5">
    <location>
        <position position="1335"/>
    </location>
</feature>
<feature type="active site" description="Proton donor; for dehydratase activity" evidence="5">
    <location>
        <position position="1523"/>
    </location>
</feature>
<feature type="modified residue" description="O-(pantetheine 4'-phosphoryl)serine" evidence="3">
    <location>
        <position position="1702"/>
    </location>
</feature>
<feature type="modified residue" description="O-(pantetheine 4'-phosphoryl)serine" evidence="3">
    <location>
        <position position="1821"/>
    </location>
</feature>
<evidence type="ECO:0000250" key="1">
    <source>
        <dbReference type="UniProtKB" id="P9WES9"/>
    </source>
</evidence>
<evidence type="ECO:0000255" key="2"/>
<evidence type="ECO:0000255" key="3">
    <source>
        <dbReference type="PROSITE-ProRule" id="PRU00258"/>
    </source>
</evidence>
<evidence type="ECO:0000255" key="4">
    <source>
        <dbReference type="PROSITE-ProRule" id="PRU01348"/>
    </source>
</evidence>
<evidence type="ECO:0000255" key="5">
    <source>
        <dbReference type="PROSITE-ProRule" id="PRU01363"/>
    </source>
</evidence>
<evidence type="ECO:0000256" key="6">
    <source>
        <dbReference type="SAM" id="MobiDB-lite"/>
    </source>
</evidence>
<evidence type="ECO:0000269" key="7">
    <source>
    </source>
</evidence>
<evidence type="ECO:0000303" key="8">
    <source>
    </source>
</evidence>
<evidence type="ECO:0000305" key="9">
    <source>
    </source>
</evidence>
<reference key="1">
    <citation type="journal article" date="2019" name="Org. Biomol. Chem.">
        <title>Heterologous biosynthesis of a fungal macrocyclic polylactone requires only two iterative polyketide synthases.</title>
        <authorList>
            <person name="Bunnak W."/>
            <person name="Wonnapinij P."/>
            <person name="Sriboonlert A."/>
            <person name="Lazarus C.M."/>
            <person name="Wattana-Amorn P."/>
        </authorList>
    </citation>
    <scope>NUCLEOTIDE SEQUENCE [MRNA]</scope>
    <scope>INDUCTION</scope>
    <scope>DOMAIN</scope>
    <scope>FUNCTION</scope>
    <scope>CATALYTIC ACTIVITY</scope>
    <source>
        <strain>BCC 4162</strain>
    </source>
</reference>
<dbReference type="EC" id="2.3.1.-" evidence="7"/>
<dbReference type="EMBL" id="LR792529">
    <property type="protein sequence ID" value="CAB3277416.1"/>
    <property type="molecule type" value="mRNA"/>
</dbReference>
<dbReference type="SMR" id="A0A6F9DYX9"/>
<dbReference type="GO" id="GO:0004315">
    <property type="term" value="F:3-oxoacyl-[acyl-carrier-protein] synthase activity"/>
    <property type="evidence" value="ECO:0007669"/>
    <property type="project" value="InterPro"/>
</dbReference>
<dbReference type="GO" id="GO:0004312">
    <property type="term" value="F:fatty acid synthase activity"/>
    <property type="evidence" value="ECO:0007669"/>
    <property type="project" value="TreeGrafter"/>
</dbReference>
<dbReference type="GO" id="GO:0031177">
    <property type="term" value="F:phosphopantetheine binding"/>
    <property type="evidence" value="ECO:0007669"/>
    <property type="project" value="InterPro"/>
</dbReference>
<dbReference type="GO" id="GO:0006633">
    <property type="term" value="P:fatty acid biosynthetic process"/>
    <property type="evidence" value="ECO:0007669"/>
    <property type="project" value="InterPro"/>
</dbReference>
<dbReference type="GO" id="GO:0044550">
    <property type="term" value="P:secondary metabolite biosynthetic process"/>
    <property type="evidence" value="ECO:0007669"/>
    <property type="project" value="TreeGrafter"/>
</dbReference>
<dbReference type="CDD" id="cd00833">
    <property type="entry name" value="PKS"/>
    <property type="match status" value="1"/>
</dbReference>
<dbReference type="Gene3D" id="3.30.70.3290">
    <property type="match status" value="1"/>
</dbReference>
<dbReference type="Gene3D" id="3.40.47.10">
    <property type="match status" value="1"/>
</dbReference>
<dbReference type="Gene3D" id="1.10.1200.10">
    <property type="entry name" value="ACP-like"/>
    <property type="match status" value="2"/>
</dbReference>
<dbReference type="Gene3D" id="3.40.50.1820">
    <property type="entry name" value="alpha/beta hydrolase"/>
    <property type="match status" value="1"/>
</dbReference>
<dbReference type="Gene3D" id="3.40.366.10">
    <property type="entry name" value="Malonyl-Coenzyme A Acyl Carrier Protein, domain 2"/>
    <property type="match status" value="2"/>
</dbReference>
<dbReference type="Gene3D" id="3.10.129.110">
    <property type="entry name" value="Polyketide synthase dehydratase"/>
    <property type="match status" value="1"/>
</dbReference>
<dbReference type="InterPro" id="IPR029058">
    <property type="entry name" value="AB_hydrolase_fold"/>
</dbReference>
<dbReference type="InterPro" id="IPR001227">
    <property type="entry name" value="Ac_transferase_dom_sf"/>
</dbReference>
<dbReference type="InterPro" id="IPR036736">
    <property type="entry name" value="ACP-like_sf"/>
</dbReference>
<dbReference type="InterPro" id="IPR014043">
    <property type="entry name" value="Acyl_transferase_dom"/>
</dbReference>
<dbReference type="InterPro" id="IPR016035">
    <property type="entry name" value="Acyl_Trfase/lysoPLipase"/>
</dbReference>
<dbReference type="InterPro" id="IPR018201">
    <property type="entry name" value="Ketoacyl_synth_AS"/>
</dbReference>
<dbReference type="InterPro" id="IPR014031">
    <property type="entry name" value="Ketoacyl_synth_C"/>
</dbReference>
<dbReference type="InterPro" id="IPR014030">
    <property type="entry name" value="Ketoacyl_synth_N"/>
</dbReference>
<dbReference type="InterPro" id="IPR016036">
    <property type="entry name" value="Malonyl_transacylase_ACP-bd"/>
</dbReference>
<dbReference type="InterPro" id="IPR020841">
    <property type="entry name" value="PKS_Beta-ketoAc_synthase_dom"/>
</dbReference>
<dbReference type="InterPro" id="IPR042104">
    <property type="entry name" value="PKS_dehydratase_sf"/>
</dbReference>
<dbReference type="InterPro" id="IPR049552">
    <property type="entry name" value="PKS_DH_N"/>
</dbReference>
<dbReference type="InterPro" id="IPR049900">
    <property type="entry name" value="PKS_mFAS_DH"/>
</dbReference>
<dbReference type="InterPro" id="IPR050091">
    <property type="entry name" value="PKS_NRPS_Biosynth_Enz"/>
</dbReference>
<dbReference type="InterPro" id="IPR020806">
    <property type="entry name" value="PKS_PP-bd"/>
</dbReference>
<dbReference type="InterPro" id="IPR009081">
    <property type="entry name" value="PP-bd_ACP"/>
</dbReference>
<dbReference type="InterPro" id="IPR030918">
    <property type="entry name" value="PT_fungal_PKS"/>
</dbReference>
<dbReference type="InterPro" id="IPR032088">
    <property type="entry name" value="SAT"/>
</dbReference>
<dbReference type="InterPro" id="IPR001031">
    <property type="entry name" value="Thioesterase"/>
</dbReference>
<dbReference type="InterPro" id="IPR016039">
    <property type="entry name" value="Thiolase-like"/>
</dbReference>
<dbReference type="NCBIfam" id="TIGR04532">
    <property type="entry name" value="PT_fungal_PKS"/>
    <property type="match status" value="1"/>
</dbReference>
<dbReference type="PANTHER" id="PTHR43775">
    <property type="entry name" value="FATTY ACID SYNTHASE"/>
    <property type="match status" value="1"/>
</dbReference>
<dbReference type="PANTHER" id="PTHR43775:SF37">
    <property type="entry name" value="SI:DKEY-61P9.11"/>
    <property type="match status" value="1"/>
</dbReference>
<dbReference type="Pfam" id="PF00698">
    <property type="entry name" value="Acyl_transf_1"/>
    <property type="match status" value="1"/>
</dbReference>
<dbReference type="Pfam" id="PF22621">
    <property type="entry name" value="CurL-like_PKS_C"/>
    <property type="match status" value="1"/>
</dbReference>
<dbReference type="Pfam" id="PF00109">
    <property type="entry name" value="ketoacyl-synt"/>
    <property type="match status" value="1"/>
</dbReference>
<dbReference type="Pfam" id="PF02801">
    <property type="entry name" value="Ketoacyl-synt_C"/>
    <property type="match status" value="1"/>
</dbReference>
<dbReference type="Pfam" id="PF21089">
    <property type="entry name" value="PKS_DH_N"/>
    <property type="match status" value="1"/>
</dbReference>
<dbReference type="Pfam" id="PF00550">
    <property type="entry name" value="PP-binding"/>
    <property type="match status" value="2"/>
</dbReference>
<dbReference type="Pfam" id="PF16073">
    <property type="entry name" value="SAT"/>
    <property type="match status" value="1"/>
</dbReference>
<dbReference type="Pfam" id="PF00975">
    <property type="entry name" value="Thioesterase"/>
    <property type="match status" value="1"/>
</dbReference>
<dbReference type="SMART" id="SM00827">
    <property type="entry name" value="PKS_AT"/>
    <property type="match status" value="1"/>
</dbReference>
<dbReference type="SMART" id="SM00825">
    <property type="entry name" value="PKS_KS"/>
    <property type="match status" value="1"/>
</dbReference>
<dbReference type="SMART" id="SM00823">
    <property type="entry name" value="PKS_PP"/>
    <property type="match status" value="2"/>
</dbReference>
<dbReference type="SUPFAM" id="SSF47336">
    <property type="entry name" value="ACP-like"/>
    <property type="match status" value="2"/>
</dbReference>
<dbReference type="SUPFAM" id="SSF53474">
    <property type="entry name" value="alpha/beta-Hydrolases"/>
    <property type="match status" value="1"/>
</dbReference>
<dbReference type="SUPFAM" id="SSF52151">
    <property type="entry name" value="FabD/lysophospholipase-like"/>
    <property type="match status" value="1"/>
</dbReference>
<dbReference type="SUPFAM" id="SSF55048">
    <property type="entry name" value="Probable ACP-binding domain of malonyl-CoA ACP transacylase"/>
    <property type="match status" value="1"/>
</dbReference>
<dbReference type="SUPFAM" id="SSF53901">
    <property type="entry name" value="Thiolase-like"/>
    <property type="match status" value="1"/>
</dbReference>
<dbReference type="PROSITE" id="PS50075">
    <property type="entry name" value="CARRIER"/>
    <property type="match status" value="2"/>
</dbReference>
<dbReference type="PROSITE" id="PS00606">
    <property type="entry name" value="KS3_1"/>
    <property type="match status" value="1"/>
</dbReference>
<dbReference type="PROSITE" id="PS52004">
    <property type="entry name" value="KS3_2"/>
    <property type="match status" value="1"/>
</dbReference>
<dbReference type="PROSITE" id="PS52019">
    <property type="entry name" value="PKS_MFAS_DH"/>
    <property type="match status" value="1"/>
</dbReference>
<sequence>MAGPVATSDRQQRLIFFGDQTVDALPCIKILTAQAHRLPALRRFLRDAADVIQVLLSSLEFDDHDHYRRFETICELAEIYSKQDGTHETIACALWTTAQFGDLVMRAELNPSILTGGQQSADPTYVVGICGGLLPAAATATARDINELLDIGRKLVAVAFRLGVAQWRRAMDIEGKPGRWAVTIVNVPAKQIRTILDAFNEDMEIPKHRQFYISFLAKGWVTVSGPPSLFPELWAYSSTLNAASKMQLPLGTPAHAAHLPPVNVSEIVGTGDVLDLTVRENFFTVSTSTCQPFQCQDLGSLLQESLRDITGKTLNIAGVNDYVISALDRNTPVRVSSFGPASQIASFKKTLEEAGYQVELDLGDPSLGNPEYPIDADSRDGSNLIAVVGQSVRFPGSEDVETFWENIKAGRSFETEIPASRFDLAHHYDATGSKTSSVTTKYGSFLENPGLFDNRLFNVSPREAKQMDPIQRILMMCSYEALQAAGYSPDGSLSTNSMRIATYFGQSGDDWRQVRASQEVDIYYIPGTVRSFAPGKLNYHYKWGGGNYAVDSACAASTTTMMLASQALLARDCDMALAGGGQLNAAPEPYAGLSRAGFLSKTTGGCKTFREDADGYCRGEGVGVVVLKRLEDALAENDNVLAVIRGADRNFSWDATSITHPSVSAQVKLVKSVLRNTGVEPEEIGFVEMHGTGTQAGDGVEMETVTTVFGSRPKDNPLYVGAVKANIGHGEAAAGVASVIKAIEVLRHRTIPTQAGFPGPRDPKFNHLDGMNIRIPESVVPFQPAPAPFSSDGKRKVLVNNFDASGGNNCVLLEEAPARDRETTADPRGVYTVAVSARTTNSLKNNISRLLGYLQSHPDASVADVAYTTTARRMHEDLKKAYTVQTASELVSLLQADLKKDLTAVQYRSPHSVVFAFTGQGAQYAGMGKQLFDTSAAFRESVQAFHELAVWQGFPEFLHLIADDQADVKAADPVQLQLAVVVLEMALANLWKSWGVEPGLVVGYSLGEYPALYVAGVLSVHDVIFLVGNRARLMQERCESGSYAMLATQSSPQDLEQVLGAYPSCAVACKGAPRSTVVSGPTEDITQLHSELKEKNINGTLLNVPYGFHCAQVDPILDDFRDMADGIQFNKPRIPVASSLEGTVVTEEGVFSSAYLVRQTREPVNFIGAVKAAESSGRADNTTVWIEIGPKRVLSSLVKSTLSADQGRLLHTIDDKDSNWKTIAAAMTAGYTEGMSIKWPKFHKLFSKHLTLLELPTYAFDLKDYWIPPAVPVTAAAPVAAPAADPSLPVIPVVPGFPTASLQQVRSEQINGDEAKVTFETVISHPALLAVIRGHRVGGVDLFPASGFMDMAFSAAKYIHHRTKSGQPVPEISMKHLAITHPLTPSSGQSRQIVIVTASKRSGSSVVDVSFRSRDGSAEQDHGDCKLHFDKRGSWDAEWAQTAHFINAAKKNVIANGTSPAGTGHRLPKSVVYKLFSSLVEYSGAFRAMEEVYVTDDFQKEAVASVVLPGGSSEFYVNPYWSDALIHVCGFLLNSSPNLPSQDCFLFNGLEEMRLLSDDLQPGIPYTSYVYLTEPGSSPDSQAPRPKHARGDVYVFQGEKIVGVAKGVVFQRLTRRVLATVLGGKLPGAAAPVREIAAPAPIRAVAPAPAPVAPRPVEMYRVPGVVGDEKADAAIGKILARAGANPAHITDATTFAEIGFDSLEWIELVREIRTSLDLEVPASFFFEYPKVNGLRRAISELSLDYQGPASGSVSVSSSATTTHGMTTPSSTSSAQSSQSSQTPDGPGIYANAVIDIVLSQTGFDKADLLPTTRFDDMGLDSLCTMEVVGVVREQTGLDLPASFFHQNPTVAHVRRALGSDSDGDSKPKSAPAPPAPEPVVEVAAPAPAVQAPPAILDGDLASYHCDFFLMQGSSDSTKTPLFFLPDGTGYPAVLLKLPPIFEGDNALFTCKSPLLNVAEGREVRCTIEGLAAAYAAAIQRARPHGPYLLAGYSLGGAYAFEVAKILADAGEVVQGLLFVDFNMAASVGKLHRDRNPVPVDLTVGAMEKTGWMQGIQNDDKDFNIPPAPPKIKFHALSVFKSLISYYPTPMTPSQRPRNTYALWAGIGMQDLLGTKNAGFLPAYGIIDWQMGDRHENNGPAGWEEYIGGPVKCATMPCDHLSLLMSHHWIPKSAEVIKGLLKDAMDN</sequence>
<organism>
    <name type="scientific">Menisporopsis theobromae</name>
    <dbReference type="NCBI Taxonomy" id="752604"/>
    <lineage>
        <taxon>Eukaryota</taxon>
        <taxon>Fungi</taxon>
        <taxon>Dikarya</taxon>
        <taxon>Ascomycota</taxon>
        <taxon>Pezizomycotina</taxon>
        <taxon>Sordariomycetes</taxon>
        <taxon>Sordariomycetidae</taxon>
        <taxon>Chaetosphaeriales</taxon>
        <taxon>Chaetosphaeriaceae</taxon>
        <taxon>Menisporopsis</taxon>
    </lineage>
</organism>
<accession>A0A6F9DYX9</accession>
<comment type="function">
    <text evidence="7">Non-reducing polyketide synthase; part of the gene cluster that mediates the biosynthesis of menisporopsin A, a bioactive macrocyclic polylactone (PubMed:30556556). The biosynthesis of menisporopsin A is performed by a reducing (man1) and a non-reducing (men2) polyketide synthase that catalyze the formation of each menisporopsin A subunits, while the esterification and cyclolactonization activities are probably peformed by the unusual thioesterase domain of men2 (PubMed:30556556). First, a reduced diketide intermediate, 3-hydroxybutyryl-S-ACP is produced by men1 and transferred to men2; this is followed by a second reduced diketide which is further elongated using 3 units of malonyl-coA to form a reduced pentaketide. The cyclization of this intermediate by the PT domain forms the second subunit, 2,4-dihydroxy-6-(2-hydroxy-n-propyl)benzoyl-S-ACP (PubMed:30556556). The TE domain of men2 then esterifies the secondary hydroxyl group on the side chain of the second subunit with the acyl-TE of the first subunit to form the first ester intermediate (PubMed:30556556). This process occurs iteratively to form a linear tetraester intermediate (PubMed:30556556). The final subunit is formed by a similar process, except that an extra malonyl-CoA is required in an additional elongation step to form a reduced hexaketide intermediate, and the carbonyl group next to the secondary hydroxyl group is reduced by a trans-acting ketoreductase (PubMed:30556556). Again, the PT domain catalyzes cyclization to form the largest subunit, 2,4-dihydroxy-6-(2,4-dihydroxy-n-pentyl) benzoyl-S-ACP (PubMed:30556556). Then the linear pentaester intermediate is formed (PubMed:30556556). In this step, if the intermediate transfer rate is slow, intra- molecular cyclization involving the secondary hydroxyl group of the pentaester intermediate may occur to form menisporopsin B (PubMed:30556556). Alternatively, transfer of the pentaester intermediate to the TE domain would allow cyclolactonization to be catalyzed by the TE to form menisporopsin A (PubMed:30556556).</text>
</comment>
<comment type="cofactor">
    <cofactor evidence="3">
        <name>pantetheine 4'-phosphate</name>
        <dbReference type="ChEBI" id="CHEBI:47942"/>
    </cofactor>
</comment>
<comment type="pathway">
    <text evidence="7">Secondary metabolite biosynthesis.</text>
</comment>
<comment type="induction">
    <text evidence="7">Exhibits highest expression levels during the menisporopsin A production phase.</text>
</comment>
<comment type="domain">
    <text evidence="9">Multidomain protein; including a starter unit:ACP transacylase (SAT) that selects the starter unit; a ketosynthase (KS) that catalyzes repeated decarboxylative condensation to elongate the polyketide backbone; a malonyl-CoA:ACP transacylase (MAT) that selects and transfers the extender unit malonyl-CoA; a product template (PT) domain that controls the immediate cyclization regioselectivity of the reactive polyketide backbone; and 2 acyl-carrier protein (ACP) domains that serve as the tethers of the growing and completed polyketide via their phosphopantetheinyl arms. The esterification and cyclolactonization activities as well as the release of the polyketide chain from the non-reducing polyketide synthase is mediated by the thioesterase (TE) domain localized at the C-ter of the protein.</text>
</comment>